<gene>
    <name evidence="1" type="primary">cysD</name>
    <name type="ordered locus">Suden_0157</name>
</gene>
<name>CYSD_SULDN</name>
<proteinExistence type="inferred from homology"/>
<feature type="chain" id="PRO_0000340222" description="Sulfate adenylyltransferase subunit 2">
    <location>
        <begin position="1"/>
        <end position="303"/>
    </location>
</feature>
<comment type="function">
    <text evidence="1">With CysN forms the ATP sulfurylase (ATPS) that catalyzes the adenylation of sulfate producing adenosine 5'-phosphosulfate (APS) and diphosphate, the first enzymatic step in sulfur assimilation pathway. APS synthesis involves the formation of a high-energy phosphoric-sulfuric acid anhydride bond driven by GTP hydrolysis by CysN coupled to ATP hydrolysis by CysD.</text>
</comment>
<comment type="catalytic activity">
    <reaction evidence="1">
        <text>sulfate + ATP + H(+) = adenosine 5'-phosphosulfate + diphosphate</text>
        <dbReference type="Rhea" id="RHEA:18133"/>
        <dbReference type="ChEBI" id="CHEBI:15378"/>
        <dbReference type="ChEBI" id="CHEBI:16189"/>
        <dbReference type="ChEBI" id="CHEBI:30616"/>
        <dbReference type="ChEBI" id="CHEBI:33019"/>
        <dbReference type="ChEBI" id="CHEBI:58243"/>
        <dbReference type="EC" id="2.7.7.4"/>
    </reaction>
</comment>
<comment type="pathway">
    <text evidence="1">Sulfur metabolism; hydrogen sulfide biosynthesis; sulfite from sulfate: step 1/3.</text>
</comment>
<comment type="subunit">
    <text evidence="1">Heterodimer composed of CysD, the smaller subunit, and CysN.</text>
</comment>
<comment type="similarity">
    <text evidence="1">Belongs to the PAPS reductase family. CysD subfamily.</text>
</comment>
<dbReference type="EC" id="2.7.7.4" evidence="1"/>
<dbReference type="EMBL" id="CP000153">
    <property type="protein sequence ID" value="ABB43438.1"/>
    <property type="molecule type" value="Genomic_DNA"/>
</dbReference>
<dbReference type="RefSeq" id="WP_011371793.1">
    <property type="nucleotide sequence ID" value="NC_007575.1"/>
</dbReference>
<dbReference type="SMR" id="Q30U93"/>
<dbReference type="STRING" id="326298.Suden_0157"/>
<dbReference type="KEGG" id="tdn:Suden_0157"/>
<dbReference type="eggNOG" id="COG0175">
    <property type="taxonomic scope" value="Bacteria"/>
</dbReference>
<dbReference type="HOGENOM" id="CLU_043026_0_0_7"/>
<dbReference type="OrthoDB" id="9772604at2"/>
<dbReference type="UniPathway" id="UPA00140">
    <property type="reaction ID" value="UER00204"/>
</dbReference>
<dbReference type="Proteomes" id="UP000002714">
    <property type="component" value="Chromosome"/>
</dbReference>
<dbReference type="GO" id="GO:0005524">
    <property type="term" value="F:ATP binding"/>
    <property type="evidence" value="ECO:0007669"/>
    <property type="project" value="UniProtKB-KW"/>
</dbReference>
<dbReference type="GO" id="GO:0004781">
    <property type="term" value="F:sulfate adenylyltransferase (ATP) activity"/>
    <property type="evidence" value="ECO:0007669"/>
    <property type="project" value="UniProtKB-UniRule"/>
</dbReference>
<dbReference type="GO" id="GO:0070814">
    <property type="term" value="P:hydrogen sulfide biosynthetic process"/>
    <property type="evidence" value="ECO:0007669"/>
    <property type="project" value="UniProtKB-UniRule"/>
</dbReference>
<dbReference type="GO" id="GO:0000103">
    <property type="term" value="P:sulfate assimilation"/>
    <property type="evidence" value="ECO:0007669"/>
    <property type="project" value="UniProtKB-UniRule"/>
</dbReference>
<dbReference type="CDD" id="cd23946">
    <property type="entry name" value="Sulfate_adenylyltransferase_2"/>
    <property type="match status" value="1"/>
</dbReference>
<dbReference type="FunFam" id="3.40.50.620:FF:000002">
    <property type="entry name" value="Sulfate adenylyltransferase subunit 2"/>
    <property type="match status" value="1"/>
</dbReference>
<dbReference type="Gene3D" id="3.40.50.620">
    <property type="entry name" value="HUPs"/>
    <property type="match status" value="1"/>
</dbReference>
<dbReference type="HAMAP" id="MF_00064">
    <property type="entry name" value="Sulf_adenylyltr_sub2"/>
    <property type="match status" value="1"/>
</dbReference>
<dbReference type="InterPro" id="IPR002500">
    <property type="entry name" value="PAPS_reduct_dom"/>
</dbReference>
<dbReference type="InterPro" id="IPR014729">
    <property type="entry name" value="Rossmann-like_a/b/a_fold"/>
</dbReference>
<dbReference type="InterPro" id="IPR011784">
    <property type="entry name" value="SO4_adenylTrfase_ssu"/>
</dbReference>
<dbReference type="InterPro" id="IPR050128">
    <property type="entry name" value="Sulfate_adenylyltrnsfr_sub2"/>
</dbReference>
<dbReference type="NCBIfam" id="TIGR02039">
    <property type="entry name" value="CysD"/>
    <property type="match status" value="1"/>
</dbReference>
<dbReference type="NCBIfam" id="NF003587">
    <property type="entry name" value="PRK05253.1"/>
    <property type="match status" value="1"/>
</dbReference>
<dbReference type="NCBIfam" id="NF009214">
    <property type="entry name" value="PRK12563.1"/>
    <property type="match status" value="1"/>
</dbReference>
<dbReference type="PANTHER" id="PTHR43196">
    <property type="entry name" value="SULFATE ADENYLYLTRANSFERASE SUBUNIT 2"/>
    <property type="match status" value="1"/>
</dbReference>
<dbReference type="PANTHER" id="PTHR43196:SF1">
    <property type="entry name" value="SULFATE ADENYLYLTRANSFERASE SUBUNIT 2"/>
    <property type="match status" value="1"/>
</dbReference>
<dbReference type="Pfam" id="PF01507">
    <property type="entry name" value="PAPS_reduct"/>
    <property type="match status" value="1"/>
</dbReference>
<dbReference type="PIRSF" id="PIRSF002936">
    <property type="entry name" value="CysDAde_trans"/>
    <property type="match status" value="1"/>
</dbReference>
<dbReference type="SUPFAM" id="SSF52402">
    <property type="entry name" value="Adenine nucleotide alpha hydrolases-like"/>
    <property type="match status" value="1"/>
</dbReference>
<sequence>MLDTKKLTHLKQLEAESIHILREVVAEFDNPVMMYSVGKDSAVMLHLALKAFFPAKLPFPLLHVDTKWKFKEMIEFRDKRAKEEGFELLVHTNPEGIEKNINPFVHGSAVHTDIMKTEGLKQALNKYKFDAVFGGARRDEEKSRAKERIYSFRDKNHRWDPKNQRPELWNLYNSKVHKGESIRVFPLSNWTELDIWQYIYLEGIPIVPLYFAKRRPVIEKDGVKIMVDDERMPIEEHEVVKEEMVRFRTLGCYPLTGAVESSATTLPEIIQEMLLTKTSERQGRMIDNDSSGSMEKKKIEGYF</sequence>
<accession>Q30U93</accession>
<protein>
    <recommendedName>
        <fullName evidence="1">Sulfate adenylyltransferase subunit 2</fullName>
        <ecNumber evidence="1">2.7.7.4</ecNumber>
    </recommendedName>
    <alternativeName>
        <fullName evidence="1">ATP-sulfurylase small subunit</fullName>
    </alternativeName>
    <alternativeName>
        <fullName evidence="1">Sulfate adenylate transferase</fullName>
        <shortName evidence="1">SAT</shortName>
    </alternativeName>
</protein>
<keyword id="KW-0067">ATP-binding</keyword>
<keyword id="KW-0547">Nucleotide-binding</keyword>
<keyword id="KW-0548">Nucleotidyltransferase</keyword>
<keyword id="KW-1185">Reference proteome</keyword>
<keyword id="KW-0808">Transferase</keyword>
<evidence type="ECO:0000255" key="1">
    <source>
        <dbReference type="HAMAP-Rule" id="MF_00064"/>
    </source>
</evidence>
<reference key="1">
    <citation type="journal article" date="2008" name="Appl. Environ. Microbiol.">
        <title>Genome of the epsilonproteobacterial chemolithoautotroph Sulfurimonas denitrificans.</title>
        <authorList>
            <person name="Sievert S.M."/>
            <person name="Scott K.M."/>
            <person name="Klotz M.G."/>
            <person name="Chain P.S.G."/>
            <person name="Hauser L.J."/>
            <person name="Hemp J."/>
            <person name="Huegler M."/>
            <person name="Land M."/>
            <person name="Lapidus A."/>
            <person name="Larimer F.W."/>
            <person name="Lucas S."/>
            <person name="Malfatti S.A."/>
            <person name="Meyer F."/>
            <person name="Paulsen I.T."/>
            <person name="Ren Q."/>
            <person name="Simon J."/>
            <person name="Bailey K."/>
            <person name="Diaz E."/>
            <person name="Fitzpatrick K.A."/>
            <person name="Glover B."/>
            <person name="Gwatney N."/>
            <person name="Korajkic A."/>
            <person name="Long A."/>
            <person name="Mobberley J.M."/>
            <person name="Pantry S.N."/>
            <person name="Pazder G."/>
            <person name="Peterson S."/>
            <person name="Quintanilla J.D."/>
            <person name="Sprinkle R."/>
            <person name="Stephens J."/>
            <person name="Thomas P."/>
            <person name="Vaughn R."/>
            <person name="Weber M.J."/>
            <person name="Wooten L.L."/>
        </authorList>
    </citation>
    <scope>NUCLEOTIDE SEQUENCE [LARGE SCALE GENOMIC DNA]</scope>
    <source>
        <strain>ATCC 33889 / DSM 1251</strain>
    </source>
</reference>
<organism>
    <name type="scientific">Sulfurimonas denitrificans (strain ATCC 33889 / DSM 1251)</name>
    <name type="common">Thiomicrospira denitrificans (strain ATCC 33889 / DSM 1251)</name>
    <dbReference type="NCBI Taxonomy" id="326298"/>
    <lineage>
        <taxon>Bacteria</taxon>
        <taxon>Pseudomonadati</taxon>
        <taxon>Campylobacterota</taxon>
        <taxon>Epsilonproteobacteria</taxon>
        <taxon>Campylobacterales</taxon>
        <taxon>Sulfurimonadaceae</taxon>
        <taxon>Sulfurimonas</taxon>
    </lineage>
</organism>